<organism>
    <name type="scientific">Anopheles gambiae</name>
    <name type="common">African malaria mosquito</name>
    <dbReference type="NCBI Taxonomy" id="7165"/>
    <lineage>
        <taxon>Eukaryota</taxon>
        <taxon>Metazoa</taxon>
        <taxon>Ecdysozoa</taxon>
        <taxon>Arthropoda</taxon>
        <taxon>Hexapoda</taxon>
        <taxon>Insecta</taxon>
        <taxon>Pterygota</taxon>
        <taxon>Neoptera</taxon>
        <taxon>Endopterygota</taxon>
        <taxon>Diptera</taxon>
        <taxon>Nematocera</taxon>
        <taxon>Culicoidea</taxon>
        <taxon>Culicidae</taxon>
        <taxon>Anophelinae</taxon>
        <taxon>Anopheles</taxon>
    </lineage>
</organism>
<reference key="1">
    <citation type="journal article" date="2002" name="Science">
        <title>The genome sequence of the malaria mosquito Anopheles gambiae.</title>
        <authorList>
            <person name="Holt R.A."/>
            <person name="Subramanian G.M."/>
            <person name="Halpern A."/>
            <person name="Sutton G.G."/>
            <person name="Charlab R."/>
            <person name="Nusskern D.R."/>
            <person name="Wincker P."/>
            <person name="Clark A.G."/>
            <person name="Ribeiro J.M.C."/>
            <person name="Wides R."/>
            <person name="Salzberg S.L."/>
            <person name="Loftus B.J."/>
            <person name="Yandell M.D."/>
            <person name="Majoros W.H."/>
            <person name="Rusch D.B."/>
            <person name="Lai Z."/>
            <person name="Kraft C.L."/>
            <person name="Abril J.F."/>
            <person name="Anthouard V."/>
            <person name="Arensburger P."/>
            <person name="Atkinson P.W."/>
            <person name="Baden H."/>
            <person name="de Berardinis V."/>
            <person name="Baldwin D."/>
            <person name="Benes V."/>
            <person name="Biedler J."/>
            <person name="Blass C."/>
            <person name="Bolanos R."/>
            <person name="Boscus D."/>
            <person name="Barnstead M."/>
            <person name="Cai S."/>
            <person name="Center A."/>
            <person name="Chaturverdi K."/>
            <person name="Christophides G.K."/>
            <person name="Chrystal M.A.M."/>
            <person name="Clamp M."/>
            <person name="Cravchik A."/>
            <person name="Curwen V."/>
            <person name="Dana A."/>
            <person name="Delcher A."/>
            <person name="Dew I."/>
            <person name="Evans C.A."/>
            <person name="Flanigan M."/>
            <person name="Grundschober-Freimoser A."/>
            <person name="Friedli L."/>
            <person name="Gu Z."/>
            <person name="Guan P."/>
            <person name="Guigo R."/>
            <person name="Hillenmeyer M.E."/>
            <person name="Hladun S.L."/>
            <person name="Hogan J.R."/>
            <person name="Hong Y.S."/>
            <person name="Hoover J."/>
            <person name="Jaillon O."/>
            <person name="Ke Z."/>
            <person name="Kodira C.D."/>
            <person name="Kokoza E."/>
            <person name="Koutsos A."/>
            <person name="Letunic I."/>
            <person name="Levitsky A.A."/>
            <person name="Liang Y."/>
            <person name="Lin J.-J."/>
            <person name="Lobo N.F."/>
            <person name="Lopez J.R."/>
            <person name="Malek J.A."/>
            <person name="McIntosh T.C."/>
            <person name="Meister S."/>
            <person name="Miller J.R."/>
            <person name="Mobarry C."/>
            <person name="Mongin E."/>
            <person name="Murphy S.D."/>
            <person name="O'Brochta D.A."/>
            <person name="Pfannkoch C."/>
            <person name="Qi R."/>
            <person name="Regier M.A."/>
            <person name="Remington K."/>
            <person name="Shao H."/>
            <person name="Sharakhova M.V."/>
            <person name="Sitter C.D."/>
            <person name="Shetty J."/>
            <person name="Smith T.J."/>
            <person name="Strong R."/>
            <person name="Sun J."/>
            <person name="Thomasova D."/>
            <person name="Ton L.Q."/>
            <person name="Topalis P."/>
            <person name="Tu Z.J."/>
            <person name="Unger M.F."/>
            <person name="Walenz B."/>
            <person name="Wang A.H."/>
            <person name="Wang J."/>
            <person name="Wang M."/>
            <person name="Wang X."/>
            <person name="Woodford K.J."/>
            <person name="Wortman J.R."/>
            <person name="Wu M."/>
            <person name="Yao A."/>
            <person name="Zdobnov E.M."/>
            <person name="Zhang H."/>
            <person name="Zhao Q."/>
            <person name="Zhao S."/>
            <person name="Zhu S.C."/>
            <person name="Zhimulev I."/>
            <person name="Coluzzi M."/>
            <person name="della Torre A."/>
            <person name="Roth C.W."/>
            <person name="Louis C."/>
            <person name="Kalush F."/>
            <person name="Mural R.J."/>
            <person name="Myers E.W."/>
            <person name="Adams M.D."/>
            <person name="Smith H.O."/>
            <person name="Broder S."/>
            <person name="Gardner M.J."/>
            <person name="Fraser C.M."/>
            <person name="Birney E."/>
            <person name="Bork P."/>
            <person name="Brey P.T."/>
            <person name="Venter J.C."/>
            <person name="Weissenbach J."/>
            <person name="Kafatos F.C."/>
            <person name="Collins F.H."/>
            <person name="Hoffman S.L."/>
        </authorList>
    </citation>
    <scope>NUCLEOTIDE SEQUENCE [LARGE SCALE GENOMIC DNA]</scope>
    <source>
        <strain>PEST</strain>
    </source>
</reference>
<sequence length="1082" mass="122657">MDASGKGAAGFEGKLFVQTIDARDENEEKYMRAYRAFEETTAGLSDKDFHDLLSSLVSKEKQHEEISLALVYIILTDPSSAPKTYRDLTLLTRDGLGFVTANLAMLVAEKYHKLTDVGRKQLLWLLRELIKNQVLNVDNLAWNILRQASGGDISPKNVALIEGLLDIFTEHRAWLEKDQFLVGTVAYTFVRLIEDHFGPQFVHLRNREVKFVISLIRDRFMDIIPLGREFVRLLQNVGRIPEFDQLWKDMLYNPKSLCPTFNGVWQLLQTRTSRRFLRGRLTPDIERKIHFLTSNVKFGNQKRYQDWFQERYFNTPESQSLRCDLIRFIISAIHPTNDMLCSDIIPRWAIIGWLLTSCTNAVTLANAKLALFYDWLFFDPAKDNIMNVEPGILVMYHSIKNHPLVSCTLLDFLCRIMKNFYPKWEDRIRTGIYNSLRKILEMKVIPNLVPLFESPKLDRELKGMLRETFREFCVPPNSMYMHPGPPQPGMETPMMMHYPGPGGGEQVEQHPPHLMHPAAKAASTAASADDPKFSDDEDDATTKPATTTTTTTTTTKTEDVSDDDDLPLAKVRLLEKPAIAKVALPDTLNGHLEEFLREKSVKTFEPLLQCLGSCGKAALNQEQENYLTESVISVIKQTLPDKSYFPASKTDDNLSESINYPLFAAYRLLYQQEDSCKKRVMALLVAIVTRVSVAGYMLLYFLKVHGKLQGRRKETAGGSTAFKASVYGVLCDALDSVDSVDECIEKDLNLLEKHNTQMFLWILPDMYREFKQTMLNNTTVLRLLVGCIDANNLGDIIYSITQGKLILFDEDGIVEILRKSLEYETFEQVCIWQLVQAHDIPLETFQEIIPELESGAHAEALTAILLLLRAEKPTTELVRLLLSRETESKHRGDPFVTSVLRYWCQEFEEKLSELIAALLTSKYPSNSPNKRKRPSKSAQQNTAPTSEQLLNHLEHFRRSCRHGNGTGTGLFVQNDMQRALQQAFTHSSESQRKQFSDLFALAAEDETSTTVGRRGTSSRGRKAPSNKKETAAEKAAAAAAAAHANNSKKAAEASAKFSDDSSDEDWSKQKASKRRKTLSDSD</sequence>
<gene>
    <name type="ORF">AGAP002539</name>
</gene>
<evidence type="ECO:0000250" key="1">
    <source>
        <dbReference type="UniProtKB" id="Q68E01"/>
    </source>
</evidence>
<evidence type="ECO:0000250" key="2">
    <source>
        <dbReference type="UniProtKB" id="Q7PLS8"/>
    </source>
</evidence>
<evidence type="ECO:0000256" key="3">
    <source>
        <dbReference type="SAM" id="MobiDB-lite"/>
    </source>
</evidence>
<evidence type="ECO:0000305" key="4"/>
<feature type="chain" id="PRO_0000385307" description="Integrator complex subunit 3 homolog">
    <location>
        <begin position="1"/>
        <end position="1082"/>
    </location>
</feature>
<feature type="region of interest" description="Disordered" evidence="3">
    <location>
        <begin position="483"/>
        <end position="563"/>
    </location>
</feature>
<feature type="region of interest" description="Disordered" evidence="3">
    <location>
        <begin position="923"/>
        <end position="945"/>
    </location>
</feature>
<feature type="region of interest" description="Disordered" evidence="3">
    <location>
        <begin position="1005"/>
        <end position="1082"/>
    </location>
</feature>
<feature type="compositionally biased region" description="Low complexity" evidence="3">
    <location>
        <begin position="517"/>
        <end position="528"/>
    </location>
</feature>
<feature type="compositionally biased region" description="Low complexity" evidence="3">
    <location>
        <begin position="542"/>
        <end position="555"/>
    </location>
</feature>
<feature type="compositionally biased region" description="Polar residues" evidence="3">
    <location>
        <begin position="936"/>
        <end position="945"/>
    </location>
</feature>
<feature type="compositionally biased region" description="Low complexity" evidence="3">
    <location>
        <begin position="1008"/>
        <end position="1018"/>
    </location>
</feature>
<feature type="compositionally biased region" description="Low complexity" evidence="3">
    <location>
        <begin position="1033"/>
        <end position="1056"/>
    </location>
</feature>
<keyword id="KW-0963">Cytoplasm</keyword>
<keyword id="KW-0539">Nucleus</keyword>
<keyword id="KW-1185">Reference proteome</keyword>
<accession>Q7PRB8</accession>
<proteinExistence type="inferred from homology"/>
<protein>
    <recommendedName>
        <fullName>Integrator complex subunit 3 homolog</fullName>
    </recommendedName>
    <alternativeName>
        <fullName>SOSS complex subunit A homolog</fullName>
    </alternativeName>
</protein>
<comment type="function">
    <text evidence="2">Component of the integrator complex, a multiprotein complex that terminates RNA polymerase II (Pol II) transcription in the promoter-proximal region of genes. The integrator complex provides a quality checkpoint during transcription elongation by driving premature transcription termination of transcripts that are unfavorably configured for transcriptional elongation: the complex terminates transcription by (1) catalyzing dephosphorylation of the C-terminal domain (CTD) of Pol II subunit Polr2A/Rbp1 and Spt5, and (2) degrading the exiting nascent RNA transcript via endonuclease activity. The integrator complex is also involved in the 3'-end processing of the U7 snRNA, and also the spliceosomal snRNAs U1, U2, U4 and U5.</text>
</comment>
<comment type="subunit">
    <text evidence="2">Belongs to the multiprotein complex Integrator. The core complex associates with protein phosphatase 2A subunits, to form the Integrator-PP2A (INTAC) complex.</text>
</comment>
<comment type="subcellular location">
    <subcellularLocation>
        <location evidence="1">Nucleus</location>
    </subcellularLocation>
    <subcellularLocation>
        <location evidence="1">Cytoplasm</location>
    </subcellularLocation>
</comment>
<comment type="similarity">
    <text evidence="4">Belongs to the Integrator subunit 3 family.</text>
</comment>
<name>INT3_ANOGA</name>
<dbReference type="EMBL" id="AAAB01008859">
    <property type="protein sequence ID" value="EAA07507.6"/>
    <property type="molecule type" value="Genomic_DNA"/>
</dbReference>
<dbReference type="RefSeq" id="XP_312400.5">
    <property type="nucleotide sequence ID" value="XM_312400.5"/>
</dbReference>
<dbReference type="SMR" id="Q7PRB8"/>
<dbReference type="FunCoup" id="Q7PRB8">
    <property type="interactions" value="2199"/>
</dbReference>
<dbReference type="STRING" id="7165.Q7PRB8"/>
<dbReference type="VEuPathDB" id="VectorBase:AGAMI1_013861"/>
<dbReference type="VEuPathDB" id="VectorBase:AGAP002539"/>
<dbReference type="eggNOG" id="KOG4262">
    <property type="taxonomic scope" value="Eukaryota"/>
</dbReference>
<dbReference type="HOGENOM" id="CLU_007659_0_0_1"/>
<dbReference type="InParanoid" id="Q7PRB8"/>
<dbReference type="OMA" id="FEQYCLW"/>
<dbReference type="Proteomes" id="UP000007062">
    <property type="component" value="Chromosome 2R"/>
</dbReference>
<dbReference type="GO" id="GO:0005737">
    <property type="term" value="C:cytoplasm"/>
    <property type="evidence" value="ECO:0000318"/>
    <property type="project" value="GO_Central"/>
</dbReference>
<dbReference type="GO" id="GO:0005634">
    <property type="term" value="C:nucleus"/>
    <property type="evidence" value="ECO:0007669"/>
    <property type="project" value="UniProtKB-SubCell"/>
</dbReference>
<dbReference type="InterPro" id="IPR056518">
    <property type="entry name" value="HEAT_Ints3_C"/>
</dbReference>
<dbReference type="InterPro" id="IPR045334">
    <property type="entry name" value="INTS3"/>
</dbReference>
<dbReference type="InterPro" id="IPR019333">
    <property type="entry name" value="INTS3_N"/>
</dbReference>
<dbReference type="PANTHER" id="PTHR13587">
    <property type="entry name" value="INTEGRATOR COMPLEX SUBUNIT 3"/>
    <property type="match status" value="1"/>
</dbReference>
<dbReference type="PANTHER" id="PTHR13587:SF7">
    <property type="entry name" value="INTEGRATOR COMPLEX SUBUNIT 3"/>
    <property type="match status" value="1"/>
</dbReference>
<dbReference type="Pfam" id="PF24566">
    <property type="entry name" value="HEAT_Ints3_C"/>
    <property type="match status" value="1"/>
</dbReference>
<dbReference type="Pfam" id="PF10189">
    <property type="entry name" value="Ints3_N"/>
    <property type="match status" value="1"/>
</dbReference>